<sequence>MKVKVAILGCSGRMGRNLIQAAHEHASIELVGGSVRTSSSFVDFDLGELAGIGAIGIKTSTTLAQLATADVFIDFTSIETTLENLTWCNENKKALVIGTTGFSDEQVQVIEQAGKTMSVILAPNTSVGVNLMFKLLQVTAKAIGDYTDIEIFEAHHRFKKDAPSGTAVKMGQVIADTLGRDLNKVAVYGREGITGERDRETIGFATVRAGDIVGEHTAFFADLGERLEITHKASSRMTFALGAMRAAFWLKDADAGFYDMQDVLGLKD</sequence>
<feature type="chain" id="PRO_0000228339" description="4-hydroxy-tetrahydrodipicolinate reductase">
    <location>
        <begin position="1"/>
        <end position="268"/>
    </location>
</feature>
<feature type="active site" description="Proton donor/acceptor" evidence="1">
    <location>
        <position position="155"/>
    </location>
</feature>
<feature type="active site" description="Proton donor" evidence="1">
    <location>
        <position position="159"/>
    </location>
</feature>
<feature type="binding site" evidence="1">
    <location>
        <begin position="9"/>
        <end position="14"/>
    </location>
    <ligand>
        <name>NAD(+)</name>
        <dbReference type="ChEBI" id="CHEBI:57540"/>
    </ligand>
</feature>
<feature type="binding site" evidence="1">
    <location>
        <position position="36"/>
    </location>
    <ligand>
        <name>NADP(+)</name>
        <dbReference type="ChEBI" id="CHEBI:58349"/>
    </ligand>
</feature>
<feature type="binding site" evidence="1">
    <location>
        <begin position="98"/>
        <end position="100"/>
    </location>
    <ligand>
        <name>NAD(+)</name>
        <dbReference type="ChEBI" id="CHEBI:57540"/>
    </ligand>
</feature>
<feature type="binding site" evidence="1">
    <location>
        <begin position="122"/>
        <end position="125"/>
    </location>
    <ligand>
        <name>NAD(+)</name>
        <dbReference type="ChEBI" id="CHEBI:57540"/>
    </ligand>
</feature>
<feature type="binding site" evidence="1">
    <location>
        <position position="156"/>
    </location>
    <ligand>
        <name>(S)-2,3,4,5-tetrahydrodipicolinate</name>
        <dbReference type="ChEBI" id="CHEBI:16845"/>
    </ligand>
</feature>
<feature type="binding site" evidence="1">
    <location>
        <begin position="165"/>
        <end position="166"/>
    </location>
    <ligand>
        <name>(S)-2,3,4,5-tetrahydrodipicolinate</name>
        <dbReference type="ChEBI" id="CHEBI:16845"/>
    </ligand>
</feature>
<keyword id="KW-0028">Amino-acid biosynthesis</keyword>
<keyword id="KW-0963">Cytoplasm</keyword>
<keyword id="KW-0220">Diaminopimelate biosynthesis</keyword>
<keyword id="KW-0457">Lysine biosynthesis</keyword>
<keyword id="KW-0520">NAD</keyword>
<keyword id="KW-0521">NADP</keyword>
<keyword id="KW-0560">Oxidoreductase</keyword>
<name>DAPB_COLP3</name>
<reference key="1">
    <citation type="journal article" date="2005" name="Proc. Natl. Acad. Sci. U.S.A.">
        <title>The psychrophilic lifestyle as revealed by the genome sequence of Colwellia psychrerythraea 34H through genomic and proteomic analyses.</title>
        <authorList>
            <person name="Methe B.A."/>
            <person name="Nelson K.E."/>
            <person name="Deming J.W."/>
            <person name="Momen B."/>
            <person name="Melamud E."/>
            <person name="Zhang X."/>
            <person name="Moult J."/>
            <person name="Madupu R."/>
            <person name="Nelson W.C."/>
            <person name="Dodson R.J."/>
            <person name="Brinkac L.M."/>
            <person name="Daugherty S.C."/>
            <person name="Durkin A.S."/>
            <person name="DeBoy R.T."/>
            <person name="Kolonay J.F."/>
            <person name="Sullivan S.A."/>
            <person name="Zhou L."/>
            <person name="Davidsen T.M."/>
            <person name="Wu M."/>
            <person name="Huston A.L."/>
            <person name="Lewis M."/>
            <person name="Weaver B."/>
            <person name="Weidman J.F."/>
            <person name="Khouri H."/>
            <person name="Utterback T.R."/>
            <person name="Feldblyum T.V."/>
            <person name="Fraser C.M."/>
        </authorList>
    </citation>
    <scope>NUCLEOTIDE SEQUENCE [LARGE SCALE GENOMIC DNA]</scope>
    <source>
        <strain>34H / ATCC BAA-681</strain>
    </source>
</reference>
<evidence type="ECO:0000255" key="1">
    <source>
        <dbReference type="HAMAP-Rule" id="MF_00102"/>
    </source>
</evidence>
<evidence type="ECO:0000305" key="2"/>
<dbReference type="EC" id="1.17.1.8" evidence="1"/>
<dbReference type="EMBL" id="CP000083">
    <property type="protein sequence ID" value="AAZ27338.1"/>
    <property type="molecule type" value="Genomic_DNA"/>
</dbReference>
<dbReference type="RefSeq" id="WP_011044220.1">
    <property type="nucleotide sequence ID" value="NC_003910.7"/>
</dbReference>
<dbReference type="SMR" id="Q47YI6"/>
<dbReference type="STRING" id="167879.CPS_3460"/>
<dbReference type="KEGG" id="cps:CPS_3460"/>
<dbReference type="eggNOG" id="COG0289">
    <property type="taxonomic scope" value="Bacteria"/>
</dbReference>
<dbReference type="HOGENOM" id="CLU_047479_2_1_6"/>
<dbReference type="UniPathway" id="UPA00034">
    <property type="reaction ID" value="UER00018"/>
</dbReference>
<dbReference type="Proteomes" id="UP000000547">
    <property type="component" value="Chromosome"/>
</dbReference>
<dbReference type="GO" id="GO:0005829">
    <property type="term" value="C:cytosol"/>
    <property type="evidence" value="ECO:0007669"/>
    <property type="project" value="TreeGrafter"/>
</dbReference>
<dbReference type="GO" id="GO:0008839">
    <property type="term" value="F:4-hydroxy-tetrahydrodipicolinate reductase"/>
    <property type="evidence" value="ECO:0007669"/>
    <property type="project" value="UniProtKB-EC"/>
</dbReference>
<dbReference type="GO" id="GO:0051287">
    <property type="term" value="F:NAD binding"/>
    <property type="evidence" value="ECO:0007669"/>
    <property type="project" value="UniProtKB-UniRule"/>
</dbReference>
<dbReference type="GO" id="GO:0050661">
    <property type="term" value="F:NADP binding"/>
    <property type="evidence" value="ECO:0007669"/>
    <property type="project" value="UniProtKB-UniRule"/>
</dbReference>
<dbReference type="GO" id="GO:0016726">
    <property type="term" value="F:oxidoreductase activity, acting on CH or CH2 groups, NAD or NADP as acceptor"/>
    <property type="evidence" value="ECO:0007669"/>
    <property type="project" value="UniProtKB-UniRule"/>
</dbReference>
<dbReference type="GO" id="GO:0019877">
    <property type="term" value="P:diaminopimelate biosynthetic process"/>
    <property type="evidence" value="ECO:0007669"/>
    <property type="project" value="UniProtKB-UniRule"/>
</dbReference>
<dbReference type="GO" id="GO:0009089">
    <property type="term" value="P:lysine biosynthetic process via diaminopimelate"/>
    <property type="evidence" value="ECO:0007669"/>
    <property type="project" value="UniProtKB-UniRule"/>
</dbReference>
<dbReference type="CDD" id="cd02274">
    <property type="entry name" value="DHDPR_N"/>
    <property type="match status" value="1"/>
</dbReference>
<dbReference type="FunFam" id="3.30.360.10:FF:000004">
    <property type="entry name" value="4-hydroxy-tetrahydrodipicolinate reductase"/>
    <property type="match status" value="1"/>
</dbReference>
<dbReference type="Gene3D" id="3.30.360.10">
    <property type="entry name" value="Dihydrodipicolinate Reductase, domain 2"/>
    <property type="match status" value="1"/>
</dbReference>
<dbReference type="Gene3D" id="3.40.50.720">
    <property type="entry name" value="NAD(P)-binding Rossmann-like Domain"/>
    <property type="match status" value="1"/>
</dbReference>
<dbReference type="HAMAP" id="MF_00102">
    <property type="entry name" value="DapB"/>
    <property type="match status" value="1"/>
</dbReference>
<dbReference type="InterPro" id="IPR022663">
    <property type="entry name" value="DapB_C"/>
</dbReference>
<dbReference type="InterPro" id="IPR000846">
    <property type="entry name" value="DapB_N"/>
</dbReference>
<dbReference type="InterPro" id="IPR022664">
    <property type="entry name" value="DapB_N_CS"/>
</dbReference>
<dbReference type="InterPro" id="IPR023940">
    <property type="entry name" value="DHDPR_bac"/>
</dbReference>
<dbReference type="InterPro" id="IPR036291">
    <property type="entry name" value="NAD(P)-bd_dom_sf"/>
</dbReference>
<dbReference type="NCBIfam" id="TIGR00036">
    <property type="entry name" value="dapB"/>
    <property type="match status" value="1"/>
</dbReference>
<dbReference type="PANTHER" id="PTHR20836:SF0">
    <property type="entry name" value="4-HYDROXY-TETRAHYDRODIPICOLINATE REDUCTASE 1, CHLOROPLASTIC-RELATED"/>
    <property type="match status" value="1"/>
</dbReference>
<dbReference type="PANTHER" id="PTHR20836">
    <property type="entry name" value="DIHYDRODIPICOLINATE REDUCTASE"/>
    <property type="match status" value="1"/>
</dbReference>
<dbReference type="Pfam" id="PF05173">
    <property type="entry name" value="DapB_C"/>
    <property type="match status" value="1"/>
</dbReference>
<dbReference type="Pfam" id="PF01113">
    <property type="entry name" value="DapB_N"/>
    <property type="match status" value="1"/>
</dbReference>
<dbReference type="PIRSF" id="PIRSF000161">
    <property type="entry name" value="DHPR"/>
    <property type="match status" value="1"/>
</dbReference>
<dbReference type="SUPFAM" id="SSF55347">
    <property type="entry name" value="Glyceraldehyde-3-phosphate dehydrogenase-like, C-terminal domain"/>
    <property type="match status" value="1"/>
</dbReference>
<dbReference type="SUPFAM" id="SSF51735">
    <property type="entry name" value="NAD(P)-binding Rossmann-fold domains"/>
    <property type="match status" value="1"/>
</dbReference>
<dbReference type="PROSITE" id="PS01298">
    <property type="entry name" value="DAPB"/>
    <property type="match status" value="1"/>
</dbReference>
<gene>
    <name evidence="1" type="primary">dapB</name>
    <name type="ordered locus">CPS_3460</name>
</gene>
<accession>Q47YI6</accession>
<organism>
    <name type="scientific">Colwellia psychrerythraea (strain 34H / ATCC BAA-681)</name>
    <name type="common">Vibrio psychroerythus</name>
    <dbReference type="NCBI Taxonomy" id="167879"/>
    <lineage>
        <taxon>Bacteria</taxon>
        <taxon>Pseudomonadati</taxon>
        <taxon>Pseudomonadota</taxon>
        <taxon>Gammaproteobacteria</taxon>
        <taxon>Alteromonadales</taxon>
        <taxon>Colwelliaceae</taxon>
        <taxon>Colwellia</taxon>
    </lineage>
</organism>
<protein>
    <recommendedName>
        <fullName evidence="1">4-hydroxy-tetrahydrodipicolinate reductase</fullName>
        <shortName evidence="1">HTPA reductase</shortName>
        <ecNumber evidence="1">1.17.1.8</ecNumber>
    </recommendedName>
</protein>
<proteinExistence type="inferred from homology"/>
<comment type="function">
    <text evidence="1">Catalyzes the conversion of 4-hydroxy-tetrahydrodipicolinate (HTPA) to tetrahydrodipicolinate.</text>
</comment>
<comment type="catalytic activity">
    <reaction evidence="1">
        <text>(S)-2,3,4,5-tetrahydrodipicolinate + NAD(+) + H2O = (2S,4S)-4-hydroxy-2,3,4,5-tetrahydrodipicolinate + NADH + H(+)</text>
        <dbReference type="Rhea" id="RHEA:35323"/>
        <dbReference type="ChEBI" id="CHEBI:15377"/>
        <dbReference type="ChEBI" id="CHEBI:15378"/>
        <dbReference type="ChEBI" id="CHEBI:16845"/>
        <dbReference type="ChEBI" id="CHEBI:57540"/>
        <dbReference type="ChEBI" id="CHEBI:57945"/>
        <dbReference type="ChEBI" id="CHEBI:67139"/>
        <dbReference type="EC" id="1.17.1.8"/>
    </reaction>
</comment>
<comment type="catalytic activity">
    <reaction evidence="1">
        <text>(S)-2,3,4,5-tetrahydrodipicolinate + NADP(+) + H2O = (2S,4S)-4-hydroxy-2,3,4,5-tetrahydrodipicolinate + NADPH + H(+)</text>
        <dbReference type="Rhea" id="RHEA:35331"/>
        <dbReference type="ChEBI" id="CHEBI:15377"/>
        <dbReference type="ChEBI" id="CHEBI:15378"/>
        <dbReference type="ChEBI" id="CHEBI:16845"/>
        <dbReference type="ChEBI" id="CHEBI:57783"/>
        <dbReference type="ChEBI" id="CHEBI:58349"/>
        <dbReference type="ChEBI" id="CHEBI:67139"/>
        <dbReference type="EC" id="1.17.1.8"/>
    </reaction>
</comment>
<comment type="pathway">
    <text evidence="1">Amino-acid biosynthesis; L-lysine biosynthesis via DAP pathway; (S)-tetrahydrodipicolinate from L-aspartate: step 4/4.</text>
</comment>
<comment type="subcellular location">
    <subcellularLocation>
        <location evidence="1">Cytoplasm</location>
    </subcellularLocation>
</comment>
<comment type="similarity">
    <text evidence="1">Belongs to the DapB family.</text>
</comment>
<comment type="caution">
    <text evidence="2">Was originally thought to be a dihydrodipicolinate reductase (DHDPR), catalyzing the conversion of dihydrodipicolinate to tetrahydrodipicolinate. However, it was shown in E.coli that the substrate of the enzymatic reaction is not dihydrodipicolinate (DHDP) but in fact (2S,4S)-4-hydroxy-2,3,4,5-tetrahydrodipicolinic acid (HTPA), the product released by the DapA-catalyzed reaction.</text>
</comment>